<evidence type="ECO:0000255" key="1">
    <source>
        <dbReference type="HAMAP-Rule" id="MF_01363"/>
    </source>
</evidence>
<evidence type="ECO:0000305" key="2"/>
<keyword id="KW-1185">Reference proteome</keyword>
<keyword id="KW-0687">Ribonucleoprotein</keyword>
<keyword id="KW-0689">Ribosomal protein</keyword>
<keyword id="KW-0694">RNA-binding</keyword>
<keyword id="KW-0699">rRNA-binding</keyword>
<sequence>MYAIIMTGGKQYKVQEGDVVFLEKLAAEEGSSVTFDKVLAVSKEGNLSFGAPVLESASVSGKVLNHGKGEKIIVFKYKAKKNIRKKKGHRQPYTKVQIEKINA</sequence>
<gene>
    <name evidence="1" type="primary">rplU</name>
    <name type="ordered locus">Ccel_1320</name>
</gene>
<reference key="1">
    <citation type="submission" date="2009-01" db="EMBL/GenBank/DDBJ databases">
        <title>Complete sequence of Clostridium cellulolyticum H10.</title>
        <authorList>
            <consortium name="US DOE Joint Genome Institute"/>
            <person name="Lucas S."/>
            <person name="Copeland A."/>
            <person name="Lapidus A."/>
            <person name="Glavina del Rio T."/>
            <person name="Dalin E."/>
            <person name="Tice H."/>
            <person name="Bruce D."/>
            <person name="Goodwin L."/>
            <person name="Pitluck S."/>
            <person name="Chertkov O."/>
            <person name="Saunders E."/>
            <person name="Brettin T."/>
            <person name="Detter J.C."/>
            <person name="Han C."/>
            <person name="Larimer F."/>
            <person name="Land M."/>
            <person name="Hauser L."/>
            <person name="Kyrpides N."/>
            <person name="Ivanova N."/>
            <person name="Zhou J."/>
            <person name="Richardson P."/>
        </authorList>
    </citation>
    <scope>NUCLEOTIDE SEQUENCE [LARGE SCALE GENOMIC DNA]</scope>
    <source>
        <strain>ATCC 35319 / DSM 5812 / JCM 6584 / H10</strain>
    </source>
</reference>
<comment type="function">
    <text evidence="1">This protein binds to 23S rRNA in the presence of protein L20.</text>
</comment>
<comment type="subunit">
    <text evidence="1">Part of the 50S ribosomal subunit. Contacts protein L20.</text>
</comment>
<comment type="similarity">
    <text evidence="1">Belongs to the bacterial ribosomal protein bL21 family.</text>
</comment>
<organism>
    <name type="scientific">Ruminiclostridium cellulolyticum (strain ATCC 35319 / DSM 5812 / JCM 6584 / H10)</name>
    <name type="common">Clostridium cellulolyticum</name>
    <dbReference type="NCBI Taxonomy" id="394503"/>
    <lineage>
        <taxon>Bacteria</taxon>
        <taxon>Bacillati</taxon>
        <taxon>Bacillota</taxon>
        <taxon>Clostridia</taxon>
        <taxon>Eubacteriales</taxon>
        <taxon>Oscillospiraceae</taxon>
        <taxon>Ruminiclostridium</taxon>
    </lineage>
</organism>
<proteinExistence type="inferred from homology"/>
<protein>
    <recommendedName>
        <fullName evidence="1">Large ribosomal subunit protein bL21</fullName>
    </recommendedName>
    <alternativeName>
        <fullName evidence="2">50S ribosomal protein L21</fullName>
    </alternativeName>
</protein>
<name>RL21_RUMCH</name>
<feature type="chain" id="PRO_1000166713" description="Large ribosomal subunit protein bL21">
    <location>
        <begin position="1"/>
        <end position="103"/>
    </location>
</feature>
<accession>B8I176</accession>
<dbReference type="EMBL" id="CP001348">
    <property type="protein sequence ID" value="ACL75674.1"/>
    <property type="molecule type" value="Genomic_DNA"/>
</dbReference>
<dbReference type="RefSeq" id="WP_015924822.1">
    <property type="nucleotide sequence ID" value="NC_011898.1"/>
</dbReference>
<dbReference type="SMR" id="B8I176"/>
<dbReference type="STRING" id="394503.Ccel_1320"/>
<dbReference type="KEGG" id="cce:Ccel_1320"/>
<dbReference type="eggNOG" id="COG0261">
    <property type="taxonomic scope" value="Bacteria"/>
</dbReference>
<dbReference type="HOGENOM" id="CLU_061463_3_2_9"/>
<dbReference type="OrthoDB" id="9813334at2"/>
<dbReference type="Proteomes" id="UP000001349">
    <property type="component" value="Chromosome"/>
</dbReference>
<dbReference type="GO" id="GO:0005737">
    <property type="term" value="C:cytoplasm"/>
    <property type="evidence" value="ECO:0007669"/>
    <property type="project" value="UniProtKB-ARBA"/>
</dbReference>
<dbReference type="GO" id="GO:1990904">
    <property type="term" value="C:ribonucleoprotein complex"/>
    <property type="evidence" value="ECO:0007669"/>
    <property type="project" value="UniProtKB-KW"/>
</dbReference>
<dbReference type="GO" id="GO:0005840">
    <property type="term" value="C:ribosome"/>
    <property type="evidence" value="ECO:0007669"/>
    <property type="project" value="UniProtKB-KW"/>
</dbReference>
<dbReference type="GO" id="GO:0019843">
    <property type="term" value="F:rRNA binding"/>
    <property type="evidence" value="ECO:0007669"/>
    <property type="project" value="UniProtKB-UniRule"/>
</dbReference>
<dbReference type="GO" id="GO:0003735">
    <property type="term" value="F:structural constituent of ribosome"/>
    <property type="evidence" value="ECO:0007669"/>
    <property type="project" value="InterPro"/>
</dbReference>
<dbReference type="GO" id="GO:0006412">
    <property type="term" value="P:translation"/>
    <property type="evidence" value="ECO:0007669"/>
    <property type="project" value="UniProtKB-UniRule"/>
</dbReference>
<dbReference type="HAMAP" id="MF_01363">
    <property type="entry name" value="Ribosomal_bL21"/>
    <property type="match status" value="1"/>
</dbReference>
<dbReference type="InterPro" id="IPR028909">
    <property type="entry name" value="bL21-like"/>
</dbReference>
<dbReference type="InterPro" id="IPR036164">
    <property type="entry name" value="bL21-like_sf"/>
</dbReference>
<dbReference type="InterPro" id="IPR001787">
    <property type="entry name" value="Ribosomal_bL21"/>
</dbReference>
<dbReference type="InterPro" id="IPR018258">
    <property type="entry name" value="Ribosomal_bL21_CS"/>
</dbReference>
<dbReference type="NCBIfam" id="TIGR00061">
    <property type="entry name" value="L21"/>
    <property type="match status" value="1"/>
</dbReference>
<dbReference type="PANTHER" id="PTHR21349">
    <property type="entry name" value="50S RIBOSOMAL PROTEIN L21"/>
    <property type="match status" value="1"/>
</dbReference>
<dbReference type="PANTHER" id="PTHR21349:SF0">
    <property type="entry name" value="LARGE RIBOSOMAL SUBUNIT PROTEIN BL21M"/>
    <property type="match status" value="1"/>
</dbReference>
<dbReference type="Pfam" id="PF00829">
    <property type="entry name" value="Ribosomal_L21p"/>
    <property type="match status" value="1"/>
</dbReference>
<dbReference type="SUPFAM" id="SSF141091">
    <property type="entry name" value="L21p-like"/>
    <property type="match status" value="1"/>
</dbReference>
<dbReference type="PROSITE" id="PS01169">
    <property type="entry name" value="RIBOSOMAL_L21"/>
    <property type="match status" value="1"/>
</dbReference>